<sequence length="1377" mass="156205">MAERADLVFHNKAIDGTAMKRLISRLIDHFGMAYTSHILDQIKTLGFQQATATSISLGIDDLLTIPSKGWLVQDAEQQSLILEKHHHYGNVHAVEKLRQSIEIWYATSEYLRQEMNPNFRMTDPSNPVHIMSFSGARGNASQVHQLVGMRGLMSDPQGQMIDLPIQSNLREGLSLTEYIISCYGARKGVVDTAVRTSDAGYLTRRLVEVVQHIVVRRTDCGTLRGSSVSPRNGTITERIFIQTLIGRVLADDIYIGSRCIAIRNQDIGIGLVNRFITFRAQPISIRTPFTCKSTSWICRLCYGRSPTHGDLVELGEAVGIIAGQSIGEPGTQLTLRTFHTGGVFTGGTAEHVRAPSNGKIKFKEDLVHPTRTRHGHPAFLCYIDLYVTIEGQDIRHNVTIPPKSFLLVQNDQYVESEQVIAEIRAGTSTLNFKERVRKHIYSDSEGEMHWSTAVYHAPEYTYGNVHLLPKTSHLWILSGGPYRSSIVSFSLHKDQDQMNVHSLSAEQKSISNLLVTNNQVRHKFLSSEPSGKKGERILDYSGPNRIICNGHCNFIYPAILHENSYLLAKRRRNRFIIPFQYNQEQEKELITRSGISIEIPINGIFRRNSILAYFDDPRYRRNSSGITKYGTIEAHSIVKKEDLIEYRKRPKYQTKIDRFFFIPEEVHILPGSSSVMVRNNSIIGVNTRITFKTRSRVGGLVRVEKKKKKIELKIFSGDIHFPGETDKISWHSGILIPPGTGKKNSKESKNFKNWIYVQRITPTKKKYFVLVRPVVTYEIADGINLATLFPQDPLQERDNVQLRVVNYILYGNGKPIRGISHTNIQLVRTCLVLNWDQEKNGSSMEEVHASFVEVRVNNLIRDFIRMDLVKSPISYTRKRNAPAGSELILANGSDYTNLNPFYSKARIQQSLTQHQGTIRTLLNRNKECQSLIFLSSSNCFRIGPFKGLKYNNMTKKSNKRDSLLLIRNSLGPLGIVPKIANFSSFYYLITHNQILINKYLLLDNLKQTFQKLKYYLMDENGRIYNPDPCSNMILNPFNWNWYFLHHDYCEETSTIISLGQFFCENVCISKYGPHLKSGQVIIVHVDSLVIRSAKPYLATPGATVHGHYGEILYKGDTLVTFIYEKSRSGDITQGLPKVEQVLEVRSIDSISMNLEKRVEGWNERITRILGIPWGFLIGAELTIAQSRVSLVNKIQKVYRSQGVQIHNRHIEIIVRQITSKVLVSEDGMSNVFSPGELIGLLRAERTGRALEEAICYRAVLLGITRASLNTQSFISEASFQETARVLAKAALRGRIDWLKGLKENVVLGGMIPVGTGFKGLVHRSSQHSNISLEIQNTNLFEGGMRDILFHHRELFYSCIPKNFHDTSEQKFTGFIDS</sequence>
<accession>Q09FX1</accession>
<dbReference type="EC" id="2.7.7.6" evidence="1"/>
<dbReference type="EMBL" id="DQ923117">
    <property type="protein sequence ID" value="ABI49853.1"/>
    <property type="molecule type" value="Genomic_DNA"/>
</dbReference>
<dbReference type="RefSeq" id="YP_740640.1">
    <property type="nucleotide sequence ID" value="NC_008336.1"/>
</dbReference>
<dbReference type="SMR" id="Q09FX1"/>
<dbReference type="GeneID" id="4271570"/>
<dbReference type="GO" id="GO:0009507">
    <property type="term" value="C:chloroplast"/>
    <property type="evidence" value="ECO:0007669"/>
    <property type="project" value="UniProtKB-SubCell"/>
</dbReference>
<dbReference type="GO" id="GO:0000428">
    <property type="term" value="C:DNA-directed RNA polymerase complex"/>
    <property type="evidence" value="ECO:0007669"/>
    <property type="project" value="UniProtKB-KW"/>
</dbReference>
<dbReference type="GO" id="GO:0005739">
    <property type="term" value="C:mitochondrion"/>
    <property type="evidence" value="ECO:0007669"/>
    <property type="project" value="GOC"/>
</dbReference>
<dbReference type="GO" id="GO:0003677">
    <property type="term" value="F:DNA binding"/>
    <property type="evidence" value="ECO:0007669"/>
    <property type="project" value="UniProtKB-UniRule"/>
</dbReference>
<dbReference type="GO" id="GO:0003899">
    <property type="term" value="F:DNA-directed RNA polymerase activity"/>
    <property type="evidence" value="ECO:0007669"/>
    <property type="project" value="UniProtKB-UniRule"/>
</dbReference>
<dbReference type="GO" id="GO:0008270">
    <property type="term" value="F:zinc ion binding"/>
    <property type="evidence" value="ECO:0007669"/>
    <property type="project" value="UniProtKB-UniRule"/>
</dbReference>
<dbReference type="GO" id="GO:0006351">
    <property type="term" value="P:DNA-templated transcription"/>
    <property type="evidence" value="ECO:0007669"/>
    <property type="project" value="UniProtKB-UniRule"/>
</dbReference>
<dbReference type="CDD" id="cd02655">
    <property type="entry name" value="RNAP_beta'_C"/>
    <property type="match status" value="1"/>
</dbReference>
<dbReference type="FunFam" id="1.10.132.30:FF:000002">
    <property type="entry name" value="DNA-directed RNA polymerase subunit beta"/>
    <property type="match status" value="1"/>
</dbReference>
<dbReference type="FunFam" id="1.10.1790.20:FF:000002">
    <property type="entry name" value="DNA-directed RNA polymerase subunit beta"/>
    <property type="match status" value="1"/>
</dbReference>
<dbReference type="Gene3D" id="1.10.132.30">
    <property type="match status" value="1"/>
</dbReference>
<dbReference type="Gene3D" id="1.10.150.390">
    <property type="match status" value="1"/>
</dbReference>
<dbReference type="Gene3D" id="1.10.1790.20">
    <property type="match status" value="1"/>
</dbReference>
<dbReference type="Gene3D" id="1.10.274.100">
    <property type="entry name" value="RNA polymerase Rpb1, domain 3"/>
    <property type="match status" value="1"/>
</dbReference>
<dbReference type="HAMAP" id="MF_01324">
    <property type="entry name" value="RNApol_bact_RpoC2"/>
    <property type="match status" value="1"/>
</dbReference>
<dbReference type="InterPro" id="IPR012756">
    <property type="entry name" value="DNA-dir_RpoC2_beta_pp"/>
</dbReference>
<dbReference type="InterPro" id="IPR050254">
    <property type="entry name" value="RNA_pol_beta''_euk"/>
</dbReference>
<dbReference type="InterPro" id="IPR042102">
    <property type="entry name" value="RNA_pol_Rpb1_3_sf"/>
</dbReference>
<dbReference type="InterPro" id="IPR007083">
    <property type="entry name" value="RNA_pol_Rpb1_4"/>
</dbReference>
<dbReference type="InterPro" id="IPR007081">
    <property type="entry name" value="RNA_pol_Rpb1_5"/>
</dbReference>
<dbReference type="InterPro" id="IPR038120">
    <property type="entry name" value="Rpb1_funnel_sf"/>
</dbReference>
<dbReference type="NCBIfam" id="TIGR02388">
    <property type="entry name" value="rpoC2_cyan"/>
    <property type="match status" value="1"/>
</dbReference>
<dbReference type="PANTHER" id="PTHR34995">
    <property type="entry name" value="DNA-DIRECTED RNA POLYMERASE SUBUNIT BETA"/>
    <property type="match status" value="1"/>
</dbReference>
<dbReference type="PANTHER" id="PTHR34995:SF1">
    <property type="entry name" value="DNA-DIRECTED RNA POLYMERASE SUBUNIT BETA"/>
    <property type="match status" value="1"/>
</dbReference>
<dbReference type="Pfam" id="PF05000">
    <property type="entry name" value="RNA_pol_Rpb1_4"/>
    <property type="match status" value="1"/>
</dbReference>
<dbReference type="Pfam" id="PF04998">
    <property type="entry name" value="RNA_pol_Rpb1_5"/>
    <property type="match status" value="2"/>
</dbReference>
<dbReference type="SUPFAM" id="SSF64484">
    <property type="entry name" value="beta and beta-prime subunits of DNA dependent RNA-polymerase"/>
    <property type="match status" value="1"/>
</dbReference>
<evidence type="ECO:0000255" key="1">
    <source>
        <dbReference type="HAMAP-Rule" id="MF_01324"/>
    </source>
</evidence>
<geneLocation type="chloroplast"/>
<feature type="chain" id="PRO_0000353571" description="DNA-directed RNA polymerase subunit beta''">
    <location>
        <begin position="1"/>
        <end position="1377"/>
    </location>
</feature>
<feature type="binding site" evidence="1">
    <location>
        <position position="220"/>
    </location>
    <ligand>
        <name>Zn(2+)</name>
        <dbReference type="ChEBI" id="CHEBI:29105"/>
    </ligand>
</feature>
<feature type="binding site" evidence="1">
    <location>
        <position position="291"/>
    </location>
    <ligand>
        <name>Zn(2+)</name>
        <dbReference type="ChEBI" id="CHEBI:29105"/>
    </ligand>
</feature>
<feature type="binding site" evidence="1">
    <location>
        <position position="298"/>
    </location>
    <ligand>
        <name>Zn(2+)</name>
        <dbReference type="ChEBI" id="CHEBI:29105"/>
    </ligand>
</feature>
<feature type="binding site" evidence="1">
    <location>
        <position position="301"/>
    </location>
    <ligand>
        <name>Zn(2+)</name>
        <dbReference type="ChEBI" id="CHEBI:29105"/>
    </ligand>
</feature>
<name>RPOC2_NANDO</name>
<proteinExistence type="inferred from homology"/>
<gene>
    <name evidence="1" type="primary">rpoC2</name>
</gene>
<comment type="function">
    <text evidence="1">DNA-dependent RNA polymerase catalyzes the transcription of DNA into RNA using the four ribonucleoside triphosphates as substrates.</text>
</comment>
<comment type="catalytic activity">
    <reaction evidence="1">
        <text>RNA(n) + a ribonucleoside 5'-triphosphate = RNA(n+1) + diphosphate</text>
        <dbReference type="Rhea" id="RHEA:21248"/>
        <dbReference type="Rhea" id="RHEA-COMP:14527"/>
        <dbReference type="Rhea" id="RHEA-COMP:17342"/>
        <dbReference type="ChEBI" id="CHEBI:33019"/>
        <dbReference type="ChEBI" id="CHEBI:61557"/>
        <dbReference type="ChEBI" id="CHEBI:140395"/>
        <dbReference type="EC" id="2.7.7.6"/>
    </reaction>
</comment>
<comment type="cofactor">
    <cofactor evidence="1">
        <name>Zn(2+)</name>
        <dbReference type="ChEBI" id="CHEBI:29105"/>
    </cofactor>
    <text evidence="1">Binds 1 Zn(2+) ion per subunit.</text>
</comment>
<comment type="subunit">
    <text evidence="1">In plastids the minimal PEP RNA polymerase catalytic core is composed of four subunits: alpha, beta, beta', and beta''. When a (nuclear-encoded) sigma factor is associated with the core the holoenzyme is formed, which can initiate transcription.</text>
</comment>
<comment type="subcellular location">
    <subcellularLocation>
        <location evidence="1">Plastid</location>
        <location evidence="1">Chloroplast</location>
    </subcellularLocation>
</comment>
<comment type="similarity">
    <text evidence="1">Belongs to the RNA polymerase beta' chain family. RpoC2 subfamily.</text>
</comment>
<reference key="1">
    <citation type="journal article" date="2006" name="BMC Plant Biol.">
        <title>Rapid and accurate pyrosequencing of angiosperm plastid genomes.</title>
        <authorList>
            <person name="Moore M.J."/>
            <person name="Dhingra A."/>
            <person name="Soltis P.S."/>
            <person name="Shaw R."/>
            <person name="Farmerie W.G."/>
            <person name="Folta K.M."/>
            <person name="Soltis D.E."/>
        </authorList>
    </citation>
    <scope>NUCLEOTIDE SEQUENCE [LARGE SCALE GENOMIC DNA]</scope>
</reference>
<protein>
    <recommendedName>
        <fullName evidence="1">DNA-directed RNA polymerase subunit beta''</fullName>
        <ecNumber evidence="1">2.7.7.6</ecNumber>
    </recommendedName>
    <alternativeName>
        <fullName evidence="1">PEP</fullName>
    </alternativeName>
    <alternativeName>
        <fullName evidence="1">Plastid-encoded RNA polymerase subunit beta''</fullName>
        <shortName evidence="1">RNA polymerase subunit beta''</shortName>
    </alternativeName>
</protein>
<keyword id="KW-0150">Chloroplast</keyword>
<keyword id="KW-0240">DNA-directed RNA polymerase</keyword>
<keyword id="KW-0479">Metal-binding</keyword>
<keyword id="KW-0548">Nucleotidyltransferase</keyword>
<keyword id="KW-0934">Plastid</keyword>
<keyword id="KW-0804">Transcription</keyword>
<keyword id="KW-0808">Transferase</keyword>
<keyword id="KW-0862">Zinc</keyword>
<organism>
    <name type="scientific">Nandina domestica</name>
    <name type="common">Heavenly bamboo</name>
    <dbReference type="NCBI Taxonomy" id="41776"/>
    <lineage>
        <taxon>Eukaryota</taxon>
        <taxon>Viridiplantae</taxon>
        <taxon>Streptophyta</taxon>
        <taxon>Embryophyta</taxon>
        <taxon>Tracheophyta</taxon>
        <taxon>Spermatophyta</taxon>
        <taxon>Magnoliopsida</taxon>
        <taxon>Ranunculales</taxon>
        <taxon>Berberidaceae</taxon>
        <taxon>Nandinoideae</taxon>
        <taxon>Nandineae</taxon>
        <taxon>Nandina</taxon>
    </lineage>
</organism>